<organism>
    <name type="scientific">Herpetosiphon aurantiacus (strain ATCC 23779 / DSM 785 / 114-95)</name>
    <dbReference type="NCBI Taxonomy" id="316274"/>
    <lineage>
        <taxon>Bacteria</taxon>
        <taxon>Bacillati</taxon>
        <taxon>Chloroflexota</taxon>
        <taxon>Chloroflexia</taxon>
        <taxon>Herpetosiphonales</taxon>
        <taxon>Herpetosiphonaceae</taxon>
        <taxon>Herpetosiphon</taxon>
    </lineage>
</organism>
<feature type="chain" id="PRO_1000140745" description="Small ribosomal subunit protein uS4">
    <location>
        <begin position="1"/>
        <end position="211"/>
    </location>
</feature>
<feature type="domain" description="S4 RNA-binding" evidence="1">
    <location>
        <begin position="99"/>
        <end position="162"/>
    </location>
</feature>
<feature type="region of interest" description="Disordered" evidence="2">
    <location>
        <begin position="27"/>
        <end position="48"/>
    </location>
</feature>
<keyword id="KW-0687">Ribonucleoprotein</keyword>
<keyword id="KW-0689">Ribosomal protein</keyword>
<keyword id="KW-0694">RNA-binding</keyword>
<keyword id="KW-0699">rRNA-binding</keyword>
<comment type="function">
    <text evidence="1">One of the primary rRNA binding proteins, it binds directly to 16S rRNA where it nucleates assembly of the body of the 30S subunit.</text>
</comment>
<comment type="function">
    <text evidence="1">With S5 and S12 plays an important role in translational accuracy.</text>
</comment>
<comment type="subunit">
    <text evidence="1">Part of the 30S ribosomal subunit. Contacts protein S5. The interaction surface between S4 and S5 is involved in control of translational fidelity.</text>
</comment>
<comment type="similarity">
    <text evidence="1">Belongs to the universal ribosomal protein uS4 family.</text>
</comment>
<proteinExistence type="inferred from homology"/>
<sequence length="211" mass="24089">MARYTGPVCKLSRREGVDLMLKSGNSGRKVLERRGSQPPGQHGASVRRRQLSDYGVQLREKQKVRRIYGVLERQFRRYYGIATRTTGQTGAVLLQILERRLDNVVFRLGYAVTRAQARQLVNHGHITVNGRKTDIPSALVEVGDVIGVRAESRKRDYFKDLEETKQLNRVSPPSWLSLDAGKMEGVVQTFPSREELDMSINEQLIVEFYSR</sequence>
<reference key="1">
    <citation type="journal article" date="2011" name="Stand. Genomic Sci.">
        <title>Complete genome sequence of the filamentous gliding predatory bacterium Herpetosiphon aurantiacus type strain (114-95(T)).</title>
        <authorList>
            <person name="Kiss H."/>
            <person name="Nett M."/>
            <person name="Domin N."/>
            <person name="Martin K."/>
            <person name="Maresca J.A."/>
            <person name="Copeland A."/>
            <person name="Lapidus A."/>
            <person name="Lucas S."/>
            <person name="Berry K.W."/>
            <person name="Glavina Del Rio T."/>
            <person name="Dalin E."/>
            <person name="Tice H."/>
            <person name="Pitluck S."/>
            <person name="Richardson P."/>
            <person name="Bruce D."/>
            <person name="Goodwin L."/>
            <person name="Han C."/>
            <person name="Detter J.C."/>
            <person name="Schmutz J."/>
            <person name="Brettin T."/>
            <person name="Land M."/>
            <person name="Hauser L."/>
            <person name="Kyrpides N.C."/>
            <person name="Ivanova N."/>
            <person name="Goeker M."/>
            <person name="Woyke T."/>
            <person name="Klenk H.P."/>
            <person name="Bryant D.A."/>
        </authorList>
    </citation>
    <scope>NUCLEOTIDE SEQUENCE [LARGE SCALE GENOMIC DNA]</scope>
    <source>
        <strain>ATCC 23779 / DSM 785 / 114-95</strain>
    </source>
</reference>
<dbReference type="EMBL" id="CP000875">
    <property type="protein sequence ID" value="ABX07569.1"/>
    <property type="molecule type" value="Genomic_DNA"/>
</dbReference>
<dbReference type="SMR" id="A9B436"/>
<dbReference type="FunCoup" id="A9B436">
    <property type="interactions" value="510"/>
</dbReference>
<dbReference type="STRING" id="316274.Haur_4939"/>
<dbReference type="KEGG" id="hau:Haur_4939"/>
<dbReference type="eggNOG" id="COG0522">
    <property type="taxonomic scope" value="Bacteria"/>
</dbReference>
<dbReference type="HOGENOM" id="CLU_092403_0_2_0"/>
<dbReference type="InParanoid" id="A9B436"/>
<dbReference type="Proteomes" id="UP000000787">
    <property type="component" value="Chromosome"/>
</dbReference>
<dbReference type="GO" id="GO:0015935">
    <property type="term" value="C:small ribosomal subunit"/>
    <property type="evidence" value="ECO:0007669"/>
    <property type="project" value="InterPro"/>
</dbReference>
<dbReference type="GO" id="GO:0019843">
    <property type="term" value="F:rRNA binding"/>
    <property type="evidence" value="ECO:0007669"/>
    <property type="project" value="UniProtKB-UniRule"/>
</dbReference>
<dbReference type="GO" id="GO:0003735">
    <property type="term" value="F:structural constituent of ribosome"/>
    <property type="evidence" value="ECO:0007669"/>
    <property type="project" value="InterPro"/>
</dbReference>
<dbReference type="GO" id="GO:0042274">
    <property type="term" value="P:ribosomal small subunit biogenesis"/>
    <property type="evidence" value="ECO:0007669"/>
    <property type="project" value="TreeGrafter"/>
</dbReference>
<dbReference type="GO" id="GO:0006412">
    <property type="term" value="P:translation"/>
    <property type="evidence" value="ECO:0007669"/>
    <property type="project" value="UniProtKB-UniRule"/>
</dbReference>
<dbReference type="CDD" id="cd00165">
    <property type="entry name" value="S4"/>
    <property type="match status" value="1"/>
</dbReference>
<dbReference type="FunFam" id="1.10.1050.10:FF:000001">
    <property type="entry name" value="30S ribosomal protein S4"/>
    <property type="match status" value="1"/>
</dbReference>
<dbReference type="FunFam" id="3.10.290.10:FF:000001">
    <property type="entry name" value="30S ribosomal protein S4"/>
    <property type="match status" value="1"/>
</dbReference>
<dbReference type="Gene3D" id="1.10.1050.10">
    <property type="entry name" value="Ribosomal Protein S4 Delta 41, Chain A, domain 1"/>
    <property type="match status" value="1"/>
</dbReference>
<dbReference type="Gene3D" id="3.10.290.10">
    <property type="entry name" value="RNA-binding S4 domain"/>
    <property type="match status" value="1"/>
</dbReference>
<dbReference type="HAMAP" id="MF_01306_B">
    <property type="entry name" value="Ribosomal_uS4_B"/>
    <property type="match status" value="1"/>
</dbReference>
<dbReference type="InterPro" id="IPR022801">
    <property type="entry name" value="Ribosomal_uS4"/>
</dbReference>
<dbReference type="InterPro" id="IPR005709">
    <property type="entry name" value="Ribosomal_uS4_bac-type"/>
</dbReference>
<dbReference type="InterPro" id="IPR018079">
    <property type="entry name" value="Ribosomal_uS4_CS"/>
</dbReference>
<dbReference type="InterPro" id="IPR001912">
    <property type="entry name" value="Ribosomal_uS4_N"/>
</dbReference>
<dbReference type="InterPro" id="IPR002942">
    <property type="entry name" value="S4_RNA-bd"/>
</dbReference>
<dbReference type="InterPro" id="IPR036986">
    <property type="entry name" value="S4_RNA-bd_sf"/>
</dbReference>
<dbReference type="NCBIfam" id="NF003717">
    <property type="entry name" value="PRK05327.1"/>
    <property type="match status" value="1"/>
</dbReference>
<dbReference type="NCBIfam" id="TIGR01017">
    <property type="entry name" value="rpsD_bact"/>
    <property type="match status" value="1"/>
</dbReference>
<dbReference type="PANTHER" id="PTHR11831">
    <property type="entry name" value="30S 40S RIBOSOMAL PROTEIN"/>
    <property type="match status" value="1"/>
</dbReference>
<dbReference type="PANTHER" id="PTHR11831:SF4">
    <property type="entry name" value="SMALL RIBOSOMAL SUBUNIT PROTEIN US4M"/>
    <property type="match status" value="1"/>
</dbReference>
<dbReference type="Pfam" id="PF00163">
    <property type="entry name" value="Ribosomal_S4"/>
    <property type="match status" value="1"/>
</dbReference>
<dbReference type="Pfam" id="PF01479">
    <property type="entry name" value="S4"/>
    <property type="match status" value="1"/>
</dbReference>
<dbReference type="SMART" id="SM01390">
    <property type="entry name" value="Ribosomal_S4"/>
    <property type="match status" value="1"/>
</dbReference>
<dbReference type="SMART" id="SM00363">
    <property type="entry name" value="S4"/>
    <property type="match status" value="1"/>
</dbReference>
<dbReference type="SUPFAM" id="SSF55174">
    <property type="entry name" value="Alpha-L RNA-binding motif"/>
    <property type="match status" value="1"/>
</dbReference>
<dbReference type="PROSITE" id="PS00632">
    <property type="entry name" value="RIBOSOMAL_S4"/>
    <property type="match status" value="1"/>
</dbReference>
<dbReference type="PROSITE" id="PS50889">
    <property type="entry name" value="S4"/>
    <property type="match status" value="1"/>
</dbReference>
<evidence type="ECO:0000255" key="1">
    <source>
        <dbReference type="HAMAP-Rule" id="MF_01306"/>
    </source>
</evidence>
<evidence type="ECO:0000256" key="2">
    <source>
        <dbReference type="SAM" id="MobiDB-lite"/>
    </source>
</evidence>
<evidence type="ECO:0000305" key="3"/>
<gene>
    <name evidence="1" type="primary">rpsD</name>
    <name type="ordered locus">Haur_4939</name>
</gene>
<protein>
    <recommendedName>
        <fullName evidence="1">Small ribosomal subunit protein uS4</fullName>
    </recommendedName>
    <alternativeName>
        <fullName evidence="3">30S ribosomal protein S4</fullName>
    </alternativeName>
</protein>
<accession>A9B436</accession>
<name>RS4_HERA2</name>